<sequence>MTQANNAVYTDLSVDDLVKEALQRGEGVLADTGALVVETGHRTGRSPVDRFIVEEPSTQDAIAWGPINRKFPADKFDALWARVEAFNNAQEHFVSHVHVGSAEDHYLAVKMTTQTAWQNLFGRCLFINPAKYNPAGRDEWQVLNVANFECVPERDGTNSDGCVILNFAQKKVLIAGMRYAGEMKKAMFSVQNFLLPASDVLPMHCAANIGEAGDVTLFFGLSGTGKTTLSADESRYLIGDDEHGWGEGVVFNIEGGCYAKCIDLSEKNEPVIWKAIKHGAVLENVVIDDAKHADYTNVSLTQNSRAAYPLEHVAKRSEKNLGGEPNAVIFLTCDLTGVLPPVSILSEEQAAYHFLSGYTALVGSTEMGSGGGIKSTFSTCFGAPFFPRPAGEYAELLIKRIRGFGSKVYLVNTGWTGGGYGVGKRFNIPTTRGVIAAIQSGALIGAETEHLDTINLDVPLAVPGVETGLLNPRNTWADKAAYDEAAKALAGLFIENFKKFEVSDAIKAAGPKL</sequence>
<protein>
    <recommendedName>
        <fullName evidence="1">Phosphoenolpyruvate carboxykinase (ATP)</fullName>
        <shortName evidence="1">PCK</shortName>
        <shortName evidence="1">PEP carboxykinase</shortName>
        <shortName evidence="1">PEPCK</shortName>
        <ecNumber evidence="1">4.1.1.49</ecNumber>
    </recommendedName>
</protein>
<comment type="function">
    <text evidence="1">Involved in the gluconeogenesis. Catalyzes the conversion of oxaloacetate (OAA) to phosphoenolpyruvate (PEP) through direct phosphoryl transfer between the nucleoside triphosphate and OAA.</text>
</comment>
<comment type="catalytic activity">
    <reaction evidence="1">
        <text>oxaloacetate + ATP = phosphoenolpyruvate + ADP + CO2</text>
        <dbReference type="Rhea" id="RHEA:18617"/>
        <dbReference type="ChEBI" id="CHEBI:16452"/>
        <dbReference type="ChEBI" id="CHEBI:16526"/>
        <dbReference type="ChEBI" id="CHEBI:30616"/>
        <dbReference type="ChEBI" id="CHEBI:58702"/>
        <dbReference type="ChEBI" id="CHEBI:456216"/>
        <dbReference type="EC" id="4.1.1.49"/>
    </reaction>
</comment>
<comment type="cofactor">
    <cofactor evidence="1">
        <name>Mn(2+)</name>
        <dbReference type="ChEBI" id="CHEBI:29035"/>
    </cofactor>
    <text evidence="1">Binds 1 Mn(2+) ion per subunit.</text>
</comment>
<comment type="pathway">
    <text evidence="1">Carbohydrate biosynthesis; gluconeogenesis.</text>
</comment>
<comment type="subunit">
    <text evidence="1">Monomer.</text>
</comment>
<comment type="subcellular location">
    <subcellularLocation>
        <location evidence="1">Cytoplasm</location>
    </subcellularLocation>
</comment>
<comment type="similarity">
    <text evidence="1">Belongs to the phosphoenolpyruvate carboxykinase (ATP) family.</text>
</comment>
<reference key="1">
    <citation type="journal article" date="2009" name="Genome Biol.">
        <title>Genomic and genetic analyses of diversity and plant interactions of Pseudomonas fluorescens.</title>
        <authorList>
            <person name="Silby M.W."/>
            <person name="Cerdeno-Tarraga A.M."/>
            <person name="Vernikos G.S."/>
            <person name="Giddens S.R."/>
            <person name="Jackson R.W."/>
            <person name="Preston G.M."/>
            <person name="Zhang X.-X."/>
            <person name="Moon C.D."/>
            <person name="Gehrig S.M."/>
            <person name="Godfrey S.A.C."/>
            <person name="Knight C.G."/>
            <person name="Malone J.G."/>
            <person name="Robinson Z."/>
            <person name="Spiers A.J."/>
            <person name="Harris S."/>
            <person name="Challis G.L."/>
            <person name="Yaxley A.M."/>
            <person name="Harris D."/>
            <person name="Seeger K."/>
            <person name="Murphy L."/>
            <person name="Rutter S."/>
            <person name="Squares R."/>
            <person name="Quail M.A."/>
            <person name="Saunders E."/>
            <person name="Mavromatis K."/>
            <person name="Brettin T.S."/>
            <person name="Bentley S.D."/>
            <person name="Hothersall J."/>
            <person name="Stephens E."/>
            <person name="Thomas C.M."/>
            <person name="Parkhill J."/>
            <person name="Levy S.B."/>
            <person name="Rainey P.B."/>
            <person name="Thomson N.R."/>
        </authorList>
    </citation>
    <scope>NUCLEOTIDE SEQUENCE [LARGE SCALE GENOMIC DNA]</scope>
    <source>
        <strain>SBW25</strain>
    </source>
</reference>
<dbReference type="EC" id="4.1.1.49" evidence="1"/>
<dbReference type="EMBL" id="AM181176">
    <property type="protein sequence ID" value="CAY46546.1"/>
    <property type="molecule type" value="Genomic_DNA"/>
</dbReference>
<dbReference type="RefSeq" id="WP_012721692.1">
    <property type="nucleotide sequence ID" value="NC_012660.1"/>
</dbReference>
<dbReference type="SMR" id="C3K4J5"/>
<dbReference type="STRING" id="294.SRM1_00319"/>
<dbReference type="eggNOG" id="COG1866">
    <property type="taxonomic scope" value="Bacteria"/>
</dbReference>
<dbReference type="HOGENOM" id="CLU_018247_0_1_6"/>
<dbReference type="OrthoDB" id="9806325at2"/>
<dbReference type="UniPathway" id="UPA00138"/>
<dbReference type="GO" id="GO:0005829">
    <property type="term" value="C:cytosol"/>
    <property type="evidence" value="ECO:0007669"/>
    <property type="project" value="TreeGrafter"/>
</dbReference>
<dbReference type="GO" id="GO:0005524">
    <property type="term" value="F:ATP binding"/>
    <property type="evidence" value="ECO:0007669"/>
    <property type="project" value="UniProtKB-UniRule"/>
</dbReference>
<dbReference type="GO" id="GO:0046872">
    <property type="term" value="F:metal ion binding"/>
    <property type="evidence" value="ECO:0007669"/>
    <property type="project" value="UniProtKB-KW"/>
</dbReference>
<dbReference type="GO" id="GO:0004612">
    <property type="term" value="F:phosphoenolpyruvate carboxykinase (ATP) activity"/>
    <property type="evidence" value="ECO:0007669"/>
    <property type="project" value="UniProtKB-UniRule"/>
</dbReference>
<dbReference type="GO" id="GO:0006094">
    <property type="term" value="P:gluconeogenesis"/>
    <property type="evidence" value="ECO:0007669"/>
    <property type="project" value="UniProtKB-UniRule"/>
</dbReference>
<dbReference type="Gene3D" id="3.90.228.20">
    <property type="match status" value="1"/>
</dbReference>
<dbReference type="Gene3D" id="3.40.449.10">
    <property type="entry name" value="Phosphoenolpyruvate Carboxykinase, domain 1"/>
    <property type="match status" value="1"/>
</dbReference>
<dbReference type="Gene3D" id="2.170.8.10">
    <property type="entry name" value="Phosphoenolpyruvate Carboxykinase, domain 2"/>
    <property type="match status" value="1"/>
</dbReference>
<dbReference type="HAMAP" id="MF_00453">
    <property type="entry name" value="PEPCK_ATP"/>
    <property type="match status" value="1"/>
</dbReference>
<dbReference type="InterPro" id="IPR001272">
    <property type="entry name" value="PEP_carboxykinase_ATP"/>
</dbReference>
<dbReference type="InterPro" id="IPR013035">
    <property type="entry name" value="PEP_carboxykinase_C"/>
</dbReference>
<dbReference type="InterPro" id="IPR008210">
    <property type="entry name" value="PEP_carboxykinase_N"/>
</dbReference>
<dbReference type="InterPro" id="IPR015994">
    <property type="entry name" value="PEPCK_ATP_CS"/>
</dbReference>
<dbReference type="NCBIfam" id="TIGR00224">
    <property type="entry name" value="pckA"/>
    <property type="match status" value="1"/>
</dbReference>
<dbReference type="NCBIfam" id="NF006820">
    <property type="entry name" value="PRK09344.1-2"/>
    <property type="match status" value="1"/>
</dbReference>
<dbReference type="NCBIfam" id="NF006821">
    <property type="entry name" value="PRK09344.1-3"/>
    <property type="match status" value="1"/>
</dbReference>
<dbReference type="NCBIfam" id="NF006823">
    <property type="entry name" value="PRK09344.1-5"/>
    <property type="match status" value="1"/>
</dbReference>
<dbReference type="PANTHER" id="PTHR30031:SF0">
    <property type="entry name" value="PHOSPHOENOLPYRUVATE CARBOXYKINASE (ATP)"/>
    <property type="match status" value="1"/>
</dbReference>
<dbReference type="PANTHER" id="PTHR30031">
    <property type="entry name" value="PHOSPHOENOLPYRUVATE CARBOXYKINASE ATP"/>
    <property type="match status" value="1"/>
</dbReference>
<dbReference type="Pfam" id="PF01293">
    <property type="entry name" value="PEPCK_ATP"/>
    <property type="match status" value="1"/>
</dbReference>
<dbReference type="PIRSF" id="PIRSF006294">
    <property type="entry name" value="PEP_crbxkin"/>
    <property type="match status" value="1"/>
</dbReference>
<dbReference type="SUPFAM" id="SSF68923">
    <property type="entry name" value="PEP carboxykinase N-terminal domain"/>
    <property type="match status" value="1"/>
</dbReference>
<dbReference type="SUPFAM" id="SSF53795">
    <property type="entry name" value="PEP carboxykinase-like"/>
    <property type="match status" value="1"/>
</dbReference>
<dbReference type="PROSITE" id="PS00532">
    <property type="entry name" value="PEPCK_ATP"/>
    <property type="match status" value="1"/>
</dbReference>
<organism>
    <name type="scientific">Pseudomonas fluorescens (strain SBW25)</name>
    <dbReference type="NCBI Taxonomy" id="216595"/>
    <lineage>
        <taxon>Bacteria</taxon>
        <taxon>Pseudomonadati</taxon>
        <taxon>Pseudomonadota</taxon>
        <taxon>Gammaproteobacteria</taxon>
        <taxon>Pseudomonadales</taxon>
        <taxon>Pseudomonadaceae</taxon>
        <taxon>Pseudomonas</taxon>
    </lineage>
</organism>
<keyword id="KW-0067">ATP-binding</keyword>
<keyword id="KW-0963">Cytoplasm</keyword>
<keyword id="KW-0210">Decarboxylase</keyword>
<keyword id="KW-0312">Gluconeogenesis</keyword>
<keyword id="KW-0456">Lyase</keyword>
<keyword id="KW-0464">Manganese</keyword>
<keyword id="KW-0479">Metal-binding</keyword>
<keyword id="KW-0547">Nucleotide-binding</keyword>
<proteinExistence type="inferred from homology"/>
<name>PCKA_PSEFS</name>
<feature type="chain" id="PRO_1000206242" description="Phosphoenolpyruvate carboxykinase (ATP)">
    <location>
        <begin position="1"/>
        <end position="513"/>
    </location>
</feature>
<feature type="binding site" evidence="1">
    <location>
        <position position="45"/>
    </location>
    <ligand>
        <name>substrate</name>
    </ligand>
</feature>
<feature type="binding site" evidence="1">
    <location>
        <position position="179"/>
    </location>
    <ligand>
        <name>substrate</name>
    </ligand>
</feature>
<feature type="binding site" evidence="1">
    <location>
        <position position="185"/>
    </location>
    <ligand>
        <name>ATP</name>
        <dbReference type="ChEBI" id="CHEBI:30616"/>
    </ligand>
</feature>
<feature type="binding site" evidence="1">
    <location>
        <position position="185"/>
    </location>
    <ligand>
        <name>Mn(2+)</name>
        <dbReference type="ChEBI" id="CHEBI:29035"/>
    </ligand>
</feature>
<feature type="binding site" evidence="1">
    <location>
        <position position="185"/>
    </location>
    <ligand>
        <name>substrate</name>
    </ligand>
</feature>
<feature type="binding site" evidence="1">
    <location>
        <position position="204"/>
    </location>
    <ligand>
        <name>ATP</name>
        <dbReference type="ChEBI" id="CHEBI:30616"/>
    </ligand>
</feature>
<feature type="binding site" evidence="1">
    <location>
        <position position="204"/>
    </location>
    <ligand>
        <name>Mn(2+)</name>
        <dbReference type="ChEBI" id="CHEBI:29035"/>
    </ligand>
</feature>
<feature type="binding site" evidence="1">
    <location>
        <begin position="220"/>
        <end position="228"/>
    </location>
    <ligand>
        <name>ATP</name>
        <dbReference type="ChEBI" id="CHEBI:30616"/>
    </ligand>
</feature>
<feature type="binding site" evidence="1">
    <location>
        <position position="241"/>
    </location>
    <ligand>
        <name>Mn(2+)</name>
        <dbReference type="ChEBI" id="CHEBI:29035"/>
    </ligand>
</feature>
<feature type="binding site" evidence="1">
    <location>
        <position position="269"/>
    </location>
    <ligand>
        <name>ATP</name>
        <dbReference type="ChEBI" id="CHEBI:30616"/>
    </ligand>
</feature>
<feature type="binding site" evidence="1">
    <location>
        <position position="305"/>
    </location>
    <ligand>
        <name>ATP</name>
        <dbReference type="ChEBI" id="CHEBI:30616"/>
    </ligand>
</feature>
<feature type="binding site" evidence="1">
    <location>
        <position position="305"/>
    </location>
    <ligand>
        <name>substrate</name>
    </ligand>
</feature>
<feature type="binding site" evidence="1">
    <location>
        <position position="431"/>
    </location>
    <ligand>
        <name>ATP</name>
        <dbReference type="ChEBI" id="CHEBI:30616"/>
    </ligand>
</feature>
<accession>C3K4J5</accession>
<evidence type="ECO:0000255" key="1">
    <source>
        <dbReference type="HAMAP-Rule" id="MF_00453"/>
    </source>
</evidence>
<gene>
    <name evidence="1" type="primary">pckA</name>
    <name type="ordered locus">PFLU_0267</name>
</gene>